<accession>Q4ZLX9</accession>
<gene>
    <name evidence="1" type="primary">thiI</name>
    <name type="ordered locus">Psyr_4816</name>
</gene>
<proteinExistence type="inferred from homology"/>
<organism>
    <name type="scientific">Pseudomonas syringae pv. syringae (strain B728a)</name>
    <dbReference type="NCBI Taxonomy" id="205918"/>
    <lineage>
        <taxon>Bacteria</taxon>
        <taxon>Pseudomonadati</taxon>
        <taxon>Pseudomonadota</taxon>
        <taxon>Gammaproteobacteria</taxon>
        <taxon>Pseudomonadales</taxon>
        <taxon>Pseudomonadaceae</taxon>
        <taxon>Pseudomonas</taxon>
        <taxon>Pseudomonas syringae</taxon>
    </lineage>
</organism>
<feature type="chain" id="PRO_1000074254" description="tRNA sulfurtransferase">
    <location>
        <begin position="1"/>
        <end position="484"/>
    </location>
</feature>
<feature type="domain" description="THUMP" evidence="1">
    <location>
        <begin position="63"/>
        <end position="167"/>
    </location>
</feature>
<feature type="domain" description="Rhodanese" evidence="1">
    <location>
        <begin position="405"/>
        <end position="483"/>
    </location>
</feature>
<feature type="active site" description="Cysteine persulfide intermediate" evidence="1">
    <location>
        <position position="457"/>
    </location>
</feature>
<feature type="binding site" evidence="1">
    <location>
        <begin position="185"/>
        <end position="186"/>
    </location>
    <ligand>
        <name>ATP</name>
        <dbReference type="ChEBI" id="CHEBI:30616"/>
    </ligand>
</feature>
<feature type="binding site" evidence="1">
    <location>
        <position position="267"/>
    </location>
    <ligand>
        <name>ATP</name>
        <dbReference type="ChEBI" id="CHEBI:30616"/>
    </ligand>
</feature>
<feature type="binding site" evidence="1">
    <location>
        <position position="289"/>
    </location>
    <ligand>
        <name>ATP</name>
        <dbReference type="ChEBI" id="CHEBI:30616"/>
    </ligand>
</feature>
<feature type="binding site" evidence="1">
    <location>
        <position position="298"/>
    </location>
    <ligand>
        <name>ATP</name>
        <dbReference type="ChEBI" id="CHEBI:30616"/>
    </ligand>
</feature>
<feature type="disulfide bond" description="Redox-active" evidence="1">
    <location>
        <begin position="346"/>
        <end position="457"/>
    </location>
</feature>
<sequence>MKLIVKVFPEITIKSPPVRKKFIRQLGKNIRTVLRELDADIVVGGVWDNLEVETRLTDPKVLQGIRERLSCMPGIANFLQVAEYPLGDLDDVVAKCELHYADLLPGKMFSVRCKRAGRHDFSSMDVEKYVGSKLRMQCGAAGIELKKPDLVVRMEIRDQRLFVVHDQHQGMGGYPLGALEQTLVLMSGGFDSTVAAYQIMRRGLMAHFCFFNLGGRAHELGVMEVAHFIWKKYGSSQRVLFVSVPFEEVLGEILQKVDNSHMGVVLKRMMLRAASAVADRLEIDVLVTGEAISQVASQTLPNLSLIDAATDKLVLRPLVATHKQDIVDLATEIGTADFARHMPEYCGVISVNPKTNAKRNRVEYEEKQFDMAILEQALERAKLVSIDRVIDDLSRNVDIEEVSQALAGQVILDIRHPDAQEDQPLQVPGVEIQTLPFYALNSRFKALDDTRQYLLYCDKGVMSRLHAHHLLSEGHANVRVYRPS</sequence>
<reference key="1">
    <citation type="journal article" date="2005" name="Proc. Natl. Acad. Sci. U.S.A.">
        <title>Comparison of the complete genome sequences of Pseudomonas syringae pv. syringae B728a and pv. tomato DC3000.</title>
        <authorList>
            <person name="Feil H."/>
            <person name="Feil W.S."/>
            <person name="Chain P."/>
            <person name="Larimer F."/>
            <person name="Dibartolo G."/>
            <person name="Copeland A."/>
            <person name="Lykidis A."/>
            <person name="Trong S."/>
            <person name="Nolan M."/>
            <person name="Goltsman E."/>
            <person name="Thiel J."/>
            <person name="Malfatti S."/>
            <person name="Loper J.E."/>
            <person name="Lapidus A."/>
            <person name="Detter J.C."/>
            <person name="Land M."/>
            <person name="Richardson P.M."/>
            <person name="Kyrpides N.C."/>
            <person name="Ivanova N."/>
            <person name="Lindow S.E."/>
        </authorList>
    </citation>
    <scope>NUCLEOTIDE SEQUENCE [LARGE SCALE GENOMIC DNA]</scope>
    <source>
        <strain>B728a</strain>
    </source>
</reference>
<protein>
    <recommendedName>
        <fullName evidence="1">tRNA sulfurtransferase</fullName>
        <ecNumber evidence="1">2.8.1.4</ecNumber>
    </recommendedName>
    <alternativeName>
        <fullName evidence="1">Sulfur carrier protein ThiS sulfurtransferase</fullName>
    </alternativeName>
    <alternativeName>
        <fullName evidence="1">Thiamine biosynthesis protein ThiI</fullName>
    </alternativeName>
    <alternativeName>
        <fullName evidence="1">tRNA 4-thiouridine synthase</fullName>
    </alternativeName>
</protein>
<comment type="function">
    <text evidence="1">Catalyzes the ATP-dependent transfer of a sulfur to tRNA to produce 4-thiouridine in position 8 of tRNAs, which functions as a near-UV photosensor. Also catalyzes the transfer of sulfur to the sulfur carrier protein ThiS, forming ThiS-thiocarboxylate. This is a step in the synthesis of thiazole, in the thiamine biosynthesis pathway. The sulfur is donated as persulfide by IscS.</text>
</comment>
<comment type="catalytic activity">
    <reaction evidence="1">
        <text>[ThiI sulfur-carrier protein]-S-sulfanyl-L-cysteine + a uridine in tRNA + 2 reduced [2Fe-2S]-[ferredoxin] + ATP + H(+) = [ThiI sulfur-carrier protein]-L-cysteine + a 4-thiouridine in tRNA + 2 oxidized [2Fe-2S]-[ferredoxin] + AMP + diphosphate</text>
        <dbReference type="Rhea" id="RHEA:24176"/>
        <dbReference type="Rhea" id="RHEA-COMP:10000"/>
        <dbReference type="Rhea" id="RHEA-COMP:10001"/>
        <dbReference type="Rhea" id="RHEA-COMP:13337"/>
        <dbReference type="Rhea" id="RHEA-COMP:13338"/>
        <dbReference type="Rhea" id="RHEA-COMP:13339"/>
        <dbReference type="Rhea" id="RHEA-COMP:13340"/>
        <dbReference type="ChEBI" id="CHEBI:15378"/>
        <dbReference type="ChEBI" id="CHEBI:29950"/>
        <dbReference type="ChEBI" id="CHEBI:30616"/>
        <dbReference type="ChEBI" id="CHEBI:33019"/>
        <dbReference type="ChEBI" id="CHEBI:33737"/>
        <dbReference type="ChEBI" id="CHEBI:33738"/>
        <dbReference type="ChEBI" id="CHEBI:61963"/>
        <dbReference type="ChEBI" id="CHEBI:65315"/>
        <dbReference type="ChEBI" id="CHEBI:136798"/>
        <dbReference type="ChEBI" id="CHEBI:456215"/>
        <dbReference type="EC" id="2.8.1.4"/>
    </reaction>
</comment>
<comment type="catalytic activity">
    <reaction evidence="1">
        <text>[ThiS sulfur-carrier protein]-C-terminal Gly-Gly-AMP + S-sulfanyl-L-cysteinyl-[cysteine desulfurase] + AH2 = [ThiS sulfur-carrier protein]-C-terminal-Gly-aminoethanethioate + L-cysteinyl-[cysteine desulfurase] + A + AMP + 2 H(+)</text>
        <dbReference type="Rhea" id="RHEA:43340"/>
        <dbReference type="Rhea" id="RHEA-COMP:12157"/>
        <dbReference type="Rhea" id="RHEA-COMP:12158"/>
        <dbReference type="Rhea" id="RHEA-COMP:12910"/>
        <dbReference type="Rhea" id="RHEA-COMP:19908"/>
        <dbReference type="ChEBI" id="CHEBI:13193"/>
        <dbReference type="ChEBI" id="CHEBI:15378"/>
        <dbReference type="ChEBI" id="CHEBI:17499"/>
        <dbReference type="ChEBI" id="CHEBI:29950"/>
        <dbReference type="ChEBI" id="CHEBI:61963"/>
        <dbReference type="ChEBI" id="CHEBI:90618"/>
        <dbReference type="ChEBI" id="CHEBI:232372"/>
        <dbReference type="ChEBI" id="CHEBI:456215"/>
    </reaction>
</comment>
<comment type="pathway">
    <text evidence="1">Cofactor biosynthesis; thiamine diphosphate biosynthesis.</text>
</comment>
<comment type="subcellular location">
    <subcellularLocation>
        <location evidence="1">Cytoplasm</location>
    </subcellularLocation>
</comment>
<comment type="similarity">
    <text evidence="1">Belongs to the ThiI family.</text>
</comment>
<dbReference type="EC" id="2.8.1.4" evidence="1"/>
<dbReference type="EMBL" id="CP000075">
    <property type="protein sequence ID" value="AAY39843.1"/>
    <property type="molecule type" value="Genomic_DNA"/>
</dbReference>
<dbReference type="RefSeq" id="WP_011269243.1">
    <property type="nucleotide sequence ID" value="NC_007005.1"/>
</dbReference>
<dbReference type="RefSeq" id="YP_237881.1">
    <property type="nucleotide sequence ID" value="NC_007005.1"/>
</dbReference>
<dbReference type="SMR" id="Q4ZLX9"/>
<dbReference type="STRING" id="205918.Psyr_4816"/>
<dbReference type="KEGG" id="psb:Psyr_4816"/>
<dbReference type="PATRIC" id="fig|205918.7.peg.4974"/>
<dbReference type="eggNOG" id="COG0301">
    <property type="taxonomic scope" value="Bacteria"/>
</dbReference>
<dbReference type="eggNOG" id="COG0607">
    <property type="taxonomic scope" value="Bacteria"/>
</dbReference>
<dbReference type="HOGENOM" id="CLU_037952_4_1_6"/>
<dbReference type="OrthoDB" id="9773948at2"/>
<dbReference type="UniPathway" id="UPA00060"/>
<dbReference type="Proteomes" id="UP000000426">
    <property type="component" value="Chromosome"/>
</dbReference>
<dbReference type="GO" id="GO:0005829">
    <property type="term" value="C:cytosol"/>
    <property type="evidence" value="ECO:0007669"/>
    <property type="project" value="TreeGrafter"/>
</dbReference>
<dbReference type="GO" id="GO:0005524">
    <property type="term" value="F:ATP binding"/>
    <property type="evidence" value="ECO:0007669"/>
    <property type="project" value="UniProtKB-UniRule"/>
</dbReference>
<dbReference type="GO" id="GO:0004810">
    <property type="term" value="F:CCA tRNA nucleotidyltransferase activity"/>
    <property type="evidence" value="ECO:0007669"/>
    <property type="project" value="InterPro"/>
</dbReference>
<dbReference type="GO" id="GO:0000049">
    <property type="term" value="F:tRNA binding"/>
    <property type="evidence" value="ECO:0007669"/>
    <property type="project" value="UniProtKB-UniRule"/>
</dbReference>
<dbReference type="GO" id="GO:0140741">
    <property type="term" value="F:tRNA-uracil-4 sulfurtransferase activity"/>
    <property type="evidence" value="ECO:0007669"/>
    <property type="project" value="UniProtKB-EC"/>
</dbReference>
<dbReference type="GO" id="GO:0009228">
    <property type="term" value="P:thiamine biosynthetic process"/>
    <property type="evidence" value="ECO:0007669"/>
    <property type="project" value="UniProtKB-KW"/>
</dbReference>
<dbReference type="GO" id="GO:0009229">
    <property type="term" value="P:thiamine diphosphate biosynthetic process"/>
    <property type="evidence" value="ECO:0007669"/>
    <property type="project" value="UniProtKB-UniRule"/>
</dbReference>
<dbReference type="GO" id="GO:0052837">
    <property type="term" value="P:thiazole biosynthetic process"/>
    <property type="evidence" value="ECO:0007669"/>
    <property type="project" value="InterPro"/>
</dbReference>
<dbReference type="GO" id="GO:0002937">
    <property type="term" value="P:tRNA 4-thiouridine biosynthesis"/>
    <property type="evidence" value="ECO:0007669"/>
    <property type="project" value="TreeGrafter"/>
</dbReference>
<dbReference type="CDD" id="cd01712">
    <property type="entry name" value="PPase_ThiI"/>
    <property type="match status" value="1"/>
</dbReference>
<dbReference type="CDD" id="cd11716">
    <property type="entry name" value="THUMP_ThiI"/>
    <property type="match status" value="1"/>
</dbReference>
<dbReference type="Gene3D" id="3.30.2130.30">
    <property type="match status" value="1"/>
</dbReference>
<dbReference type="Gene3D" id="3.40.50.620">
    <property type="entry name" value="HUPs"/>
    <property type="match status" value="1"/>
</dbReference>
<dbReference type="Gene3D" id="3.40.250.10">
    <property type="entry name" value="Rhodanese-like domain"/>
    <property type="match status" value="1"/>
</dbReference>
<dbReference type="HAMAP" id="MF_00021">
    <property type="entry name" value="ThiI"/>
    <property type="match status" value="1"/>
</dbReference>
<dbReference type="InterPro" id="IPR001763">
    <property type="entry name" value="Rhodanese-like_dom"/>
</dbReference>
<dbReference type="InterPro" id="IPR036873">
    <property type="entry name" value="Rhodanese-like_dom_sf"/>
</dbReference>
<dbReference type="InterPro" id="IPR014729">
    <property type="entry name" value="Rossmann-like_a/b/a_fold"/>
</dbReference>
<dbReference type="InterPro" id="IPR020536">
    <property type="entry name" value="ThiI_AANH"/>
</dbReference>
<dbReference type="InterPro" id="IPR054173">
    <property type="entry name" value="ThiI_fer"/>
</dbReference>
<dbReference type="InterPro" id="IPR049961">
    <property type="entry name" value="ThiI_N"/>
</dbReference>
<dbReference type="InterPro" id="IPR026340">
    <property type="entry name" value="THII_Thiazole_biosynth_dom"/>
</dbReference>
<dbReference type="InterPro" id="IPR004114">
    <property type="entry name" value="THUMP_dom"/>
</dbReference>
<dbReference type="InterPro" id="IPR049962">
    <property type="entry name" value="THUMP_ThiI"/>
</dbReference>
<dbReference type="InterPro" id="IPR003720">
    <property type="entry name" value="tRNA_STrfase"/>
</dbReference>
<dbReference type="InterPro" id="IPR050102">
    <property type="entry name" value="tRNA_sulfurtransferase_ThiI"/>
</dbReference>
<dbReference type="NCBIfam" id="TIGR04271">
    <property type="entry name" value="ThiI_C_thiazole"/>
    <property type="match status" value="1"/>
</dbReference>
<dbReference type="NCBIfam" id="TIGR00342">
    <property type="entry name" value="tRNA uracil 4-sulfurtransferase ThiI"/>
    <property type="match status" value="1"/>
</dbReference>
<dbReference type="PANTHER" id="PTHR43209">
    <property type="entry name" value="TRNA SULFURTRANSFERASE"/>
    <property type="match status" value="1"/>
</dbReference>
<dbReference type="PANTHER" id="PTHR43209:SF1">
    <property type="entry name" value="TRNA SULFURTRANSFERASE"/>
    <property type="match status" value="1"/>
</dbReference>
<dbReference type="Pfam" id="PF02568">
    <property type="entry name" value="ThiI"/>
    <property type="match status" value="1"/>
</dbReference>
<dbReference type="Pfam" id="PF22025">
    <property type="entry name" value="ThiI_fer"/>
    <property type="match status" value="1"/>
</dbReference>
<dbReference type="Pfam" id="PF02926">
    <property type="entry name" value="THUMP"/>
    <property type="match status" value="1"/>
</dbReference>
<dbReference type="SMART" id="SM00981">
    <property type="entry name" value="THUMP"/>
    <property type="match status" value="1"/>
</dbReference>
<dbReference type="SUPFAM" id="SSF52402">
    <property type="entry name" value="Adenine nucleotide alpha hydrolases-like"/>
    <property type="match status" value="1"/>
</dbReference>
<dbReference type="SUPFAM" id="SSF52821">
    <property type="entry name" value="Rhodanese/Cell cycle control phosphatase"/>
    <property type="match status" value="1"/>
</dbReference>
<dbReference type="SUPFAM" id="SSF143437">
    <property type="entry name" value="THUMP domain-like"/>
    <property type="match status" value="1"/>
</dbReference>
<dbReference type="PROSITE" id="PS50206">
    <property type="entry name" value="RHODANESE_3"/>
    <property type="match status" value="1"/>
</dbReference>
<dbReference type="PROSITE" id="PS51165">
    <property type="entry name" value="THUMP"/>
    <property type="match status" value="1"/>
</dbReference>
<keyword id="KW-0067">ATP-binding</keyword>
<keyword id="KW-0963">Cytoplasm</keyword>
<keyword id="KW-1015">Disulfide bond</keyword>
<keyword id="KW-0547">Nucleotide-binding</keyword>
<keyword id="KW-0676">Redox-active center</keyword>
<keyword id="KW-0694">RNA-binding</keyword>
<keyword id="KW-0784">Thiamine biosynthesis</keyword>
<keyword id="KW-0808">Transferase</keyword>
<keyword id="KW-0820">tRNA-binding</keyword>
<name>THII_PSEU2</name>
<evidence type="ECO:0000255" key="1">
    <source>
        <dbReference type="HAMAP-Rule" id="MF_00021"/>
    </source>
</evidence>